<name>IF4E5_ARATH</name>
<keyword id="KW-0396">Initiation factor</keyword>
<keyword id="KW-0648">Protein biosynthesis</keyword>
<keyword id="KW-1185">Reference proteome</keyword>
<keyword id="KW-0694">RNA-binding</keyword>
<keyword id="KW-0810">Translation regulation</keyword>
<proteinExistence type="evidence at protein level"/>
<evidence type="ECO:0000269" key="1">
    <source>
    </source>
</evidence>
<evidence type="ECO:0000305" key="2"/>
<reference key="1">
    <citation type="journal article" date="1998" name="J. Biol. Chem.">
        <title>Identification and characterization of a novel cap-binding protein from Arabidopsis thaliana.</title>
        <authorList>
            <person name="Ruud K.A."/>
            <person name="Kuhlow C."/>
            <person name="Goss D.J."/>
            <person name="Browning K.S."/>
        </authorList>
    </citation>
    <scope>NUCLEOTIDE SEQUENCE [MRNA]</scope>
    <scope>FUNCTION</scope>
</reference>
<reference key="2">
    <citation type="journal article" date="1998" name="DNA Res.">
        <title>Structural analysis of Arabidopsis thaliana chromosome 5. VI. Sequence features of the regions of 1,367,185 bp covered by 19 physically assigned P1 and TAC clones.</title>
        <authorList>
            <person name="Kotani H."/>
            <person name="Nakamura Y."/>
            <person name="Sato S."/>
            <person name="Asamizu E."/>
            <person name="Kaneko T."/>
            <person name="Miyajima N."/>
            <person name="Tabata S."/>
        </authorList>
    </citation>
    <scope>NUCLEOTIDE SEQUENCE [LARGE SCALE GENOMIC DNA]</scope>
    <source>
        <strain>cv. Columbia</strain>
    </source>
</reference>
<reference key="3">
    <citation type="journal article" date="2017" name="Plant J.">
        <title>Araport11: a complete reannotation of the Arabidopsis thaliana reference genome.</title>
        <authorList>
            <person name="Cheng C.Y."/>
            <person name="Krishnakumar V."/>
            <person name="Chan A.P."/>
            <person name="Thibaud-Nissen F."/>
            <person name="Schobel S."/>
            <person name="Town C.D."/>
        </authorList>
    </citation>
    <scope>GENOME REANNOTATION</scope>
    <source>
        <strain>cv. Columbia</strain>
    </source>
</reference>
<reference key="4">
    <citation type="journal article" date="2003" name="Science">
        <title>Empirical analysis of transcriptional activity in the Arabidopsis genome.</title>
        <authorList>
            <person name="Yamada K."/>
            <person name="Lim J."/>
            <person name="Dale J.M."/>
            <person name="Chen H."/>
            <person name="Shinn P."/>
            <person name="Palm C.J."/>
            <person name="Southwick A.M."/>
            <person name="Wu H.C."/>
            <person name="Kim C.J."/>
            <person name="Nguyen M."/>
            <person name="Pham P.K."/>
            <person name="Cheuk R.F."/>
            <person name="Karlin-Newmann G."/>
            <person name="Liu S.X."/>
            <person name="Lam B."/>
            <person name="Sakano H."/>
            <person name="Wu T."/>
            <person name="Yu G."/>
            <person name="Miranda M."/>
            <person name="Quach H.L."/>
            <person name="Tripp M."/>
            <person name="Chang C.H."/>
            <person name="Lee J.M."/>
            <person name="Toriumi M.J."/>
            <person name="Chan M.M."/>
            <person name="Tang C.C."/>
            <person name="Onodera C.S."/>
            <person name="Deng J.M."/>
            <person name="Akiyama K."/>
            <person name="Ansari Y."/>
            <person name="Arakawa T."/>
            <person name="Banh J."/>
            <person name="Banno F."/>
            <person name="Bowser L."/>
            <person name="Brooks S.Y."/>
            <person name="Carninci P."/>
            <person name="Chao Q."/>
            <person name="Choy N."/>
            <person name="Enju A."/>
            <person name="Goldsmith A.D."/>
            <person name="Gurjal M."/>
            <person name="Hansen N.F."/>
            <person name="Hayashizaki Y."/>
            <person name="Johnson-Hopson C."/>
            <person name="Hsuan V.W."/>
            <person name="Iida K."/>
            <person name="Karnes M."/>
            <person name="Khan S."/>
            <person name="Koesema E."/>
            <person name="Ishida J."/>
            <person name="Jiang P.X."/>
            <person name="Jones T."/>
            <person name="Kawai J."/>
            <person name="Kamiya A."/>
            <person name="Meyers C."/>
            <person name="Nakajima M."/>
            <person name="Narusaka M."/>
            <person name="Seki M."/>
            <person name="Sakurai T."/>
            <person name="Satou M."/>
            <person name="Tamse R."/>
            <person name="Vaysberg M."/>
            <person name="Wallender E.K."/>
            <person name="Wong C."/>
            <person name="Yamamura Y."/>
            <person name="Yuan S."/>
            <person name="Shinozaki K."/>
            <person name="Davis R.W."/>
            <person name="Theologis A."/>
            <person name="Ecker J.R."/>
        </authorList>
    </citation>
    <scope>NUCLEOTIDE SEQUENCE [LARGE SCALE MRNA]</scope>
    <source>
        <strain>cv. Columbia</strain>
    </source>
</reference>
<feature type="chain" id="PRO_0000193666" description="Eukaryotic translation initiation factor NCBP">
    <location>
        <begin position="1"/>
        <end position="221"/>
    </location>
</feature>
<feature type="sequence conflict" description="In Ref. 1; AAC17220." evidence="2" ref="1">
    <original>D</original>
    <variation>L</variation>
    <location>
        <position position="42"/>
    </location>
</feature>
<organism>
    <name type="scientific">Arabidopsis thaliana</name>
    <name type="common">Mouse-ear cress</name>
    <dbReference type="NCBI Taxonomy" id="3702"/>
    <lineage>
        <taxon>Eukaryota</taxon>
        <taxon>Viridiplantae</taxon>
        <taxon>Streptophyta</taxon>
        <taxon>Embryophyta</taxon>
        <taxon>Tracheophyta</taxon>
        <taxon>Spermatophyta</taxon>
        <taxon>Magnoliopsida</taxon>
        <taxon>eudicotyledons</taxon>
        <taxon>Gunneridae</taxon>
        <taxon>Pentapetalae</taxon>
        <taxon>rosids</taxon>
        <taxon>malvids</taxon>
        <taxon>Brassicales</taxon>
        <taxon>Brassicaceae</taxon>
        <taxon>Camelineae</taxon>
        <taxon>Arabidopsis</taxon>
    </lineage>
</organism>
<dbReference type="EMBL" id="AF028809">
    <property type="protein sequence ID" value="AAC17220.1"/>
    <property type="molecule type" value="mRNA"/>
</dbReference>
<dbReference type="EMBL" id="AB012246">
    <property type="protein sequence ID" value="BAB09469.1"/>
    <property type="molecule type" value="Genomic_DNA"/>
</dbReference>
<dbReference type="EMBL" id="CP002688">
    <property type="protein sequence ID" value="AED92508.1"/>
    <property type="molecule type" value="Genomic_DNA"/>
</dbReference>
<dbReference type="EMBL" id="AY092964">
    <property type="protein sequence ID" value="AAM12963.1"/>
    <property type="molecule type" value="mRNA"/>
</dbReference>
<dbReference type="EMBL" id="AY093208">
    <property type="protein sequence ID" value="AAM13207.1"/>
    <property type="molecule type" value="mRNA"/>
</dbReference>
<dbReference type="EMBL" id="AY114562">
    <property type="protein sequence ID" value="AAM47881.1"/>
    <property type="molecule type" value="mRNA"/>
</dbReference>
<dbReference type="PIR" id="T52138">
    <property type="entry name" value="T52138"/>
</dbReference>
<dbReference type="RefSeq" id="NP_197312.1">
    <property type="nucleotide sequence ID" value="NM_121816.2"/>
</dbReference>
<dbReference type="SMR" id="Q9FK59"/>
<dbReference type="BioGRID" id="17205">
    <property type="interactions" value="5"/>
</dbReference>
<dbReference type="FunCoup" id="Q9FK59">
    <property type="interactions" value="3708"/>
</dbReference>
<dbReference type="IntAct" id="Q9FK59">
    <property type="interactions" value="5"/>
</dbReference>
<dbReference type="STRING" id="3702.Q9FK59"/>
<dbReference type="iPTMnet" id="Q9FK59"/>
<dbReference type="PaxDb" id="3702-AT5G18110.1"/>
<dbReference type="ProteomicsDB" id="250675"/>
<dbReference type="EnsemblPlants" id="AT5G18110.1">
    <property type="protein sequence ID" value="AT5G18110.1"/>
    <property type="gene ID" value="AT5G18110"/>
</dbReference>
<dbReference type="GeneID" id="831929"/>
<dbReference type="Gramene" id="AT5G18110.1">
    <property type="protein sequence ID" value="AT5G18110.1"/>
    <property type="gene ID" value="AT5G18110"/>
</dbReference>
<dbReference type="KEGG" id="ath:AT5G18110"/>
<dbReference type="Araport" id="AT5G18110"/>
<dbReference type="TAIR" id="AT5G18110">
    <property type="gene designation" value="NCBP"/>
</dbReference>
<dbReference type="eggNOG" id="KOG1669">
    <property type="taxonomic scope" value="Eukaryota"/>
</dbReference>
<dbReference type="HOGENOM" id="CLU_043552_3_1_1"/>
<dbReference type="InParanoid" id="Q9FK59"/>
<dbReference type="OMA" id="VWNKTAN"/>
<dbReference type="PhylomeDB" id="Q9FK59"/>
<dbReference type="PRO" id="PR:Q9FK59"/>
<dbReference type="Proteomes" id="UP000006548">
    <property type="component" value="Chromosome 5"/>
</dbReference>
<dbReference type="ExpressionAtlas" id="Q9FK59">
    <property type="expression patterns" value="baseline and differential"/>
</dbReference>
<dbReference type="GO" id="GO:0005737">
    <property type="term" value="C:cytoplasm"/>
    <property type="evidence" value="ECO:0007669"/>
    <property type="project" value="InterPro"/>
</dbReference>
<dbReference type="GO" id="GO:0003723">
    <property type="term" value="F:RNA binding"/>
    <property type="evidence" value="ECO:0007669"/>
    <property type="project" value="UniProtKB-KW"/>
</dbReference>
<dbReference type="GO" id="GO:0003743">
    <property type="term" value="F:translation initiation factor activity"/>
    <property type="evidence" value="ECO:0007669"/>
    <property type="project" value="UniProtKB-KW"/>
</dbReference>
<dbReference type="GO" id="GO:0006417">
    <property type="term" value="P:regulation of translation"/>
    <property type="evidence" value="ECO:0007669"/>
    <property type="project" value="UniProtKB-KW"/>
</dbReference>
<dbReference type="GO" id="GO:0009615">
    <property type="term" value="P:response to virus"/>
    <property type="evidence" value="ECO:0007669"/>
    <property type="project" value="UniProtKB-ARBA"/>
</dbReference>
<dbReference type="FunFam" id="3.30.760.10:FF:000008">
    <property type="entry name" value="Eukaryotic translation initiation factor NCBP"/>
    <property type="match status" value="1"/>
</dbReference>
<dbReference type="Gene3D" id="3.30.760.10">
    <property type="entry name" value="RNA Cap, Translation Initiation Factor Eif4e"/>
    <property type="match status" value="1"/>
</dbReference>
<dbReference type="InterPro" id="IPR023398">
    <property type="entry name" value="TIF_eIF4e-like"/>
</dbReference>
<dbReference type="InterPro" id="IPR001040">
    <property type="entry name" value="TIF_eIF_4E"/>
</dbReference>
<dbReference type="InterPro" id="IPR019770">
    <property type="entry name" value="TIF_eIF_4E_CS"/>
</dbReference>
<dbReference type="PANTHER" id="PTHR11960:SF18">
    <property type="entry name" value="EUKARYOTIC TRANSLATION INITIATION FACTOR 4E HOMOLOGOUS PROTEIN, ISOFORM B"/>
    <property type="match status" value="1"/>
</dbReference>
<dbReference type="PANTHER" id="PTHR11960">
    <property type="entry name" value="EUKARYOTIC TRANSLATION INITIATION FACTOR 4E RELATED"/>
    <property type="match status" value="1"/>
</dbReference>
<dbReference type="Pfam" id="PF01652">
    <property type="entry name" value="IF4E"/>
    <property type="match status" value="1"/>
</dbReference>
<dbReference type="SUPFAM" id="SSF55418">
    <property type="entry name" value="eIF4e-like"/>
    <property type="match status" value="1"/>
</dbReference>
<dbReference type="PROSITE" id="PS00813">
    <property type="entry name" value="IF4E"/>
    <property type="match status" value="1"/>
</dbReference>
<accession>Q9FK59</accession>
<accession>O64928</accession>
<comment type="function">
    <text evidence="1">Recognizes and binds the 7-methylguanosine-containing mRNA cap during an early step in the initiation of protein synthesis and facilitates ribosome binding by inducing the unwinding of the mRNAs secondary structures.</text>
</comment>
<comment type="subunit">
    <text>EIF4F is a multi-subunit complex, the composition of which varies with external and internal environmental conditions. It is composed of at least EIF4A, EIF4E and EIF4G. EIF4E is also known to interact with other partners. In higher plants two isoforms of EIF4F have been identified, named isoform EIF4F and isoform EIF(iso)4F. Isoform EIF4F has subunits p220 and p26, whereas isoform EIF(iso)4F has subunits p82 and p28.</text>
</comment>
<comment type="interaction">
    <interactant intactId="EBI-1770573">
        <id>Q9FK59</id>
    </interactant>
    <interactant intactId="EBI-4426649">
        <id>Q17TI5</id>
        <label>BRX</label>
    </interactant>
    <organismsDiffer>false</organismsDiffer>
    <experiments>3</experiments>
</comment>
<comment type="interaction">
    <interactant intactId="EBI-1770573">
        <id>Q9FK59</id>
    </interactant>
    <interactant intactId="EBI-4426557">
        <id>Q84MB2</id>
        <label>TIFY8</label>
    </interactant>
    <organismsDiffer>false</organismsDiffer>
    <experiments>3</experiments>
</comment>
<comment type="similarity">
    <text evidence="2">Belongs to the eukaryotic initiation factor 4E family.</text>
</comment>
<gene>
    <name type="primary">NCBP</name>
    <name type="ordered locus">At5g18110</name>
    <name type="ORF">MRG7.7</name>
</gene>
<sequence length="221" mass="25745">MEVLDRRDDEIRDSGNMDSIKSHYVTDSVSEERRSRELKDGDHPLRYKFSIWYTRRTPGVRNQSYEDNIKKMVEFSTVEGFWACYCHLARSSLLPSPTDLHFFKDGIRPLWEDGANCNGGKWIIRFSKVVSARFWEDLLLALVGDQLDDADNICGAVLSVRFNEDIISVWNRNASDHQAVMGLRDSIKRHLKLPHAYVMEYKPHDASLRDNSSYRNTWLRG</sequence>
<protein>
    <recommendedName>
        <fullName>Eukaryotic translation initiation factor NCBP</fullName>
    </recommendedName>
    <alternativeName>
        <fullName>Novel cap-binding protein</fullName>
        <shortName>nCBP</shortName>
    </alternativeName>
    <alternativeName>
        <fullName>mRNA cap-binding protein</fullName>
    </alternativeName>
</protein>